<name>PYRC_LACDA</name>
<sequence length="425" mass="46291">MQTVIKNGTVYQNGRLIHADVLIEDQKIKAIGTDLTGDKVIDATGKLVSPGLVDVHVHYRDPGQTYKEDIETGSKAAAHGGFTTVGAMPNVTPVPDTPDLMKKMVQENKQKGIVHIFQYGPITKNETTDELPDYAALKKAGAFALSNDGHGVQTAQTMYLAMQEAKKNDLIVAAHAQDDSLFNHGIVNEGEKAKELNLPPVTELAETTQIARDLLLAEKTGVHYHICHVSTKTSVELVRMAKACGINVTCEAAPHHLLLTEDDIPKDNGYYKMNPPLRSKEDQAALLVGLLDGTIDLIATDHAPHAKQEKQGGMQNAAFGITGSETAFSTLYTKFVKEDKVFTLEQLLSWLSDQPAKVFGLKKAGVLEPGCPADVAIFDLEHETELKEKNYQSKGINTPFTGQKIYGATVMTMVDGEVVYQRGEK</sequence>
<proteinExistence type="inferred from homology"/>
<dbReference type="EC" id="3.5.2.3" evidence="1"/>
<dbReference type="EMBL" id="CR954253">
    <property type="protein sequence ID" value="CAI98849.1"/>
    <property type="molecule type" value="Genomic_DNA"/>
</dbReference>
<dbReference type="RefSeq" id="WP_003623962.1">
    <property type="nucleotide sequence ID" value="NZ_JQAV01000024.1"/>
</dbReference>
<dbReference type="SMR" id="Q1G867"/>
<dbReference type="STRING" id="390333.Ldb2111"/>
<dbReference type="KEGG" id="ldb:Ldb2111"/>
<dbReference type="PATRIC" id="fig|390333.13.peg.1145"/>
<dbReference type="eggNOG" id="COG0044">
    <property type="taxonomic scope" value="Bacteria"/>
</dbReference>
<dbReference type="HOGENOM" id="CLU_015572_1_0_9"/>
<dbReference type="BioCyc" id="LDEL390333:LDB_RS09195-MONOMER"/>
<dbReference type="UniPathway" id="UPA00070">
    <property type="reaction ID" value="UER00117"/>
</dbReference>
<dbReference type="Proteomes" id="UP000001259">
    <property type="component" value="Chromosome"/>
</dbReference>
<dbReference type="GO" id="GO:0005737">
    <property type="term" value="C:cytoplasm"/>
    <property type="evidence" value="ECO:0007669"/>
    <property type="project" value="TreeGrafter"/>
</dbReference>
<dbReference type="GO" id="GO:0004038">
    <property type="term" value="F:allantoinase activity"/>
    <property type="evidence" value="ECO:0007669"/>
    <property type="project" value="TreeGrafter"/>
</dbReference>
<dbReference type="GO" id="GO:0004151">
    <property type="term" value="F:dihydroorotase activity"/>
    <property type="evidence" value="ECO:0007669"/>
    <property type="project" value="UniProtKB-UniRule"/>
</dbReference>
<dbReference type="GO" id="GO:0008270">
    <property type="term" value="F:zinc ion binding"/>
    <property type="evidence" value="ECO:0007669"/>
    <property type="project" value="UniProtKB-UniRule"/>
</dbReference>
<dbReference type="GO" id="GO:0044205">
    <property type="term" value="P:'de novo' UMP biosynthetic process"/>
    <property type="evidence" value="ECO:0007669"/>
    <property type="project" value="UniProtKB-UniRule"/>
</dbReference>
<dbReference type="GO" id="GO:0006145">
    <property type="term" value="P:purine nucleobase catabolic process"/>
    <property type="evidence" value="ECO:0007669"/>
    <property type="project" value="TreeGrafter"/>
</dbReference>
<dbReference type="CDD" id="cd01317">
    <property type="entry name" value="DHOase_IIa"/>
    <property type="match status" value="1"/>
</dbReference>
<dbReference type="Gene3D" id="3.20.20.140">
    <property type="entry name" value="Metal-dependent hydrolases"/>
    <property type="match status" value="1"/>
</dbReference>
<dbReference type="HAMAP" id="MF_00220_B">
    <property type="entry name" value="PyrC_classI_B"/>
    <property type="match status" value="1"/>
</dbReference>
<dbReference type="InterPro" id="IPR006680">
    <property type="entry name" value="Amidohydro-rel"/>
</dbReference>
<dbReference type="InterPro" id="IPR004722">
    <property type="entry name" value="DHOase"/>
</dbReference>
<dbReference type="InterPro" id="IPR050138">
    <property type="entry name" value="DHOase/Allantoinase_Hydrolase"/>
</dbReference>
<dbReference type="InterPro" id="IPR002195">
    <property type="entry name" value="Dihydroorotase_CS"/>
</dbReference>
<dbReference type="InterPro" id="IPR011059">
    <property type="entry name" value="Metal-dep_hydrolase_composite"/>
</dbReference>
<dbReference type="InterPro" id="IPR032466">
    <property type="entry name" value="Metal_Hydrolase"/>
</dbReference>
<dbReference type="NCBIfam" id="NF006837">
    <property type="entry name" value="PRK09357.1-2"/>
    <property type="match status" value="1"/>
</dbReference>
<dbReference type="NCBIfam" id="TIGR00857">
    <property type="entry name" value="pyrC_multi"/>
    <property type="match status" value="1"/>
</dbReference>
<dbReference type="PANTHER" id="PTHR43668">
    <property type="entry name" value="ALLANTOINASE"/>
    <property type="match status" value="1"/>
</dbReference>
<dbReference type="PANTHER" id="PTHR43668:SF2">
    <property type="entry name" value="ALLANTOINASE"/>
    <property type="match status" value="1"/>
</dbReference>
<dbReference type="Pfam" id="PF01979">
    <property type="entry name" value="Amidohydro_1"/>
    <property type="match status" value="1"/>
</dbReference>
<dbReference type="SUPFAM" id="SSF51338">
    <property type="entry name" value="Composite domain of metallo-dependent hydrolases"/>
    <property type="match status" value="1"/>
</dbReference>
<dbReference type="SUPFAM" id="SSF51556">
    <property type="entry name" value="Metallo-dependent hydrolases"/>
    <property type="match status" value="1"/>
</dbReference>
<dbReference type="PROSITE" id="PS00483">
    <property type="entry name" value="DIHYDROOROTASE_2"/>
    <property type="match status" value="1"/>
</dbReference>
<organism>
    <name type="scientific">Lactobacillus delbrueckii subsp. bulgaricus (strain ATCC 11842 / DSM 20081 / BCRC 10696 / JCM 1002 / NBRC 13953 / NCIMB 11778 / NCTC 12712 / WDCM 00102 / Lb 14)</name>
    <dbReference type="NCBI Taxonomy" id="390333"/>
    <lineage>
        <taxon>Bacteria</taxon>
        <taxon>Bacillati</taxon>
        <taxon>Bacillota</taxon>
        <taxon>Bacilli</taxon>
        <taxon>Lactobacillales</taxon>
        <taxon>Lactobacillaceae</taxon>
        <taxon>Lactobacillus</taxon>
    </lineage>
</organism>
<evidence type="ECO:0000255" key="1">
    <source>
        <dbReference type="HAMAP-Rule" id="MF_00220"/>
    </source>
</evidence>
<protein>
    <recommendedName>
        <fullName evidence="1">Dihydroorotase</fullName>
        <shortName evidence="1">DHOase</shortName>
        <ecNumber evidence="1">3.5.2.3</ecNumber>
    </recommendedName>
</protein>
<comment type="function">
    <text evidence="1">Catalyzes the reversible cyclization of carbamoyl aspartate to dihydroorotate.</text>
</comment>
<comment type="catalytic activity">
    <reaction evidence="1">
        <text>(S)-dihydroorotate + H2O = N-carbamoyl-L-aspartate + H(+)</text>
        <dbReference type="Rhea" id="RHEA:24296"/>
        <dbReference type="ChEBI" id="CHEBI:15377"/>
        <dbReference type="ChEBI" id="CHEBI:15378"/>
        <dbReference type="ChEBI" id="CHEBI:30864"/>
        <dbReference type="ChEBI" id="CHEBI:32814"/>
        <dbReference type="EC" id="3.5.2.3"/>
    </reaction>
</comment>
<comment type="cofactor">
    <cofactor evidence="1">
        <name>Zn(2+)</name>
        <dbReference type="ChEBI" id="CHEBI:29105"/>
    </cofactor>
    <text evidence="1">Binds 2 Zn(2+) ions per subunit.</text>
</comment>
<comment type="pathway">
    <text evidence="1">Pyrimidine metabolism; UMP biosynthesis via de novo pathway; (S)-dihydroorotate from bicarbonate: step 3/3.</text>
</comment>
<comment type="similarity">
    <text evidence="1">Belongs to the metallo-dependent hydrolases superfamily. DHOase family. Class I DHOase subfamily.</text>
</comment>
<feature type="chain" id="PRO_1000024087" description="Dihydroorotase">
    <location>
        <begin position="1"/>
        <end position="425"/>
    </location>
</feature>
<feature type="active site" evidence="1">
    <location>
        <position position="301"/>
    </location>
</feature>
<feature type="binding site" evidence="1">
    <location>
        <position position="56"/>
    </location>
    <ligand>
        <name>Zn(2+)</name>
        <dbReference type="ChEBI" id="CHEBI:29105"/>
        <label>1</label>
    </ligand>
</feature>
<feature type="binding site" evidence="1">
    <location>
        <begin position="58"/>
        <end position="60"/>
    </location>
    <ligand>
        <name>substrate</name>
    </ligand>
</feature>
<feature type="binding site" evidence="1">
    <location>
        <position position="58"/>
    </location>
    <ligand>
        <name>Zn(2+)</name>
        <dbReference type="ChEBI" id="CHEBI:29105"/>
        <label>1</label>
    </ligand>
</feature>
<feature type="binding site" evidence="1">
    <location>
        <position position="90"/>
    </location>
    <ligand>
        <name>substrate</name>
    </ligand>
</feature>
<feature type="binding site" evidence="1">
    <location>
        <position position="148"/>
    </location>
    <ligand>
        <name>Zn(2+)</name>
        <dbReference type="ChEBI" id="CHEBI:29105"/>
        <label>1</label>
    </ligand>
</feature>
<feature type="binding site" evidence="1">
    <location>
        <position position="148"/>
    </location>
    <ligand>
        <name>Zn(2+)</name>
        <dbReference type="ChEBI" id="CHEBI:29105"/>
        <label>2</label>
    </ligand>
</feature>
<feature type="binding site" evidence="1">
    <location>
        <position position="175"/>
    </location>
    <ligand>
        <name>Zn(2+)</name>
        <dbReference type="ChEBI" id="CHEBI:29105"/>
        <label>2</label>
    </ligand>
</feature>
<feature type="binding site" evidence="1">
    <location>
        <position position="228"/>
    </location>
    <ligand>
        <name>Zn(2+)</name>
        <dbReference type="ChEBI" id="CHEBI:29105"/>
        <label>2</label>
    </ligand>
</feature>
<feature type="binding site" evidence="1">
    <location>
        <position position="274"/>
    </location>
    <ligand>
        <name>substrate</name>
    </ligand>
</feature>
<feature type="binding site" evidence="1">
    <location>
        <position position="301"/>
    </location>
    <ligand>
        <name>Zn(2+)</name>
        <dbReference type="ChEBI" id="CHEBI:29105"/>
        <label>1</label>
    </ligand>
</feature>
<feature type="binding site" evidence="1">
    <location>
        <position position="305"/>
    </location>
    <ligand>
        <name>substrate</name>
    </ligand>
</feature>
<feature type="binding site" evidence="1">
    <location>
        <begin position="319"/>
        <end position="320"/>
    </location>
    <ligand>
        <name>substrate</name>
    </ligand>
</feature>
<gene>
    <name evidence="1" type="primary">pyrC</name>
    <name type="ordered locus">Ldb2111</name>
</gene>
<accession>Q1G867</accession>
<keyword id="KW-0378">Hydrolase</keyword>
<keyword id="KW-0479">Metal-binding</keyword>
<keyword id="KW-0665">Pyrimidine biosynthesis</keyword>
<keyword id="KW-1185">Reference proteome</keyword>
<keyword id="KW-0862">Zinc</keyword>
<reference key="1">
    <citation type="journal article" date="2006" name="Proc. Natl. Acad. Sci. U.S.A.">
        <title>The complete genome sequence of Lactobacillus bulgaricus reveals extensive and ongoing reductive evolution.</title>
        <authorList>
            <person name="van de Guchte M."/>
            <person name="Penaud S."/>
            <person name="Grimaldi C."/>
            <person name="Barbe V."/>
            <person name="Bryson K."/>
            <person name="Nicolas P."/>
            <person name="Robert C."/>
            <person name="Oztas S."/>
            <person name="Mangenot S."/>
            <person name="Couloux A."/>
            <person name="Loux V."/>
            <person name="Dervyn R."/>
            <person name="Bossy R."/>
            <person name="Bolotin A."/>
            <person name="Batto J.-M."/>
            <person name="Walunas T."/>
            <person name="Gibrat J.-F."/>
            <person name="Bessieres P."/>
            <person name="Weissenbach J."/>
            <person name="Ehrlich S.D."/>
            <person name="Maguin E."/>
        </authorList>
    </citation>
    <scope>NUCLEOTIDE SEQUENCE [LARGE SCALE GENOMIC DNA]</scope>
    <source>
        <strain>ATCC 11842 / DSM 20081 / BCRC 10696 / JCM 1002 / NBRC 13953 / NCIMB 11778 / NCTC 12712 / WDCM 00102 / Lb 14</strain>
    </source>
</reference>